<reference key="1">
    <citation type="journal article" date="2003" name="Proc. Natl. Acad. Sci. U.S.A.">
        <title>Genome sequence of the cyanobacterium Prochlorococcus marinus SS120, a nearly minimal oxyphototrophic genome.</title>
        <authorList>
            <person name="Dufresne A."/>
            <person name="Salanoubat M."/>
            <person name="Partensky F."/>
            <person name="Artiguenave F."/>
            <person name="Axmann I.M."/>
            <person name="Barbe V."/>
            <person name="Duprat S."/>
            <person name="Galperin M.Y."/>
            <person name="Koonin E.V."/>
            <person name="Le Gall F."/>
            <person name="Makarova K.S."/>
            <person name="Ostrowski M."/>
            <person name="Oztas S."/>
            <person name="Robert C."/>
            <person name="Rogozin I.B."/>
            <person name="Scanlan D.J."/>
            <person name="Tandeau de Marsac N."/>
            <person name="Weissenbach J."/>
            <person name="Wincker P."/>
            <person name="Wolf Y.I."/>
            <person name="Hess W.R."/>
        </authorList>
    </citation>
    <scope>NUCLEOTIDE SEQUENCE [LARGE SCALE GENOMIC DNA]</scope>
    <source>
        <strain>SARG / CCMP1375 / SS120</strain>
    </source>
</reference>
<sequence>MCKKIIWLTIGKIVAPQGLSGKVRINPSSDFPERFIKSGDRWLQYDNEEPQKIQLNSGRQIPGKSIYVVEFQGIDDREKAKALVGKKLLIDSSHRPTLAPGEFHLLDLLGLKVRLKNDHREIGEVTNLTSAGNDLLEVRLLSGKKVLVPFVKEIVPEIKLQEGWLMVCPPPGLFDL</sequence>
<evidence type="ECO:0000255" key="1">
    <source>
        <dbReference type="HAMAP-Rule" id="MF_00014"/>
    </source>
</evidence>
<dbReference type="EMBL" id="AE017126">
    <property type="protein sequence ID" value="AAQ00808.1"/>
    <property type="molecule type" value="Genomic_DNA"/>
</dbReference>
<dbReference type="RefSeq" id="NP_876155.1">
    <property type="nucleotide sequence ID" value="NC_005042.1"/>
</dbReference>
<dbReference type="RefSeq" id="WP_011125913.1">
    <property type="nucleotide sequence ID" value="NC_005042.1"/>
</dbReference>
<dbReference type="SMR" id="Q7V9R4"/>
<dbReference type="STRING" id="167539.Pro_1764"/>
<dbReference type="EnsemblBacteria" id="AAQ00808">
    <property type="protein sequence ID" value="AAQ00808"/>
    <property type="gene ID" value="Pro_1764"/>
</dbReference>
<dbReference type="KEGG" id="pma:Pro_1764"/>
<dbReference type="PATRIC" id="fig|167539.5.peg.1863"/>
<dbReference type="eggNOG" id="COG0806">
    <property type="taxonomic scope" value="Bacteria"/>
</dbReference>
<dbReference type="HOGENOM" id="CLU_077636_3_1_3"/>
<dbReference type="OrthoDB" id="9810331at2"/>
<dbReference type="Proteomes" id="UP000001420">
    <property type="component" value="Chromosome"/>
</dbReference>
<dbReference type="GO" id="GO:0005737">
    <property type="term" value="C:cytoplasm"/>
    <property type="evidence" value="ECO:0007669"/>
    <property type="project" value="UniProtKB-SubCell"/>
</dbReference>
<dbReference type="GO" id="GO:0005840">
    <property type="term" value="C:ribosome"/>
    <property type="evidence" value="ECO:0007669"/>
    <property type="project" value="InterPro"/>
</dbReference>
<dbReference type="GO" id="GO:0043022">
    <property type="term" value="F:ribosome binding"/>
    <property type="evidence" value="ECO:0007669"/>
    <property type="project" value="InterPro"/>
</dbReference>
<dbReference type="GO" id="GO:0042274">
    <property type="term" value="P:ribosomal small subunit biogenesis"/>
    <property type="evidence" value="ECO:0007669"/>
    <property type="project" value="UniProtKB-UniRule"/>
</dbReference>
<dbReference type="GO" id="GO:0006364">
    <property type="term" value="P:rRNA processing"/>
    <property type="evidence" value="ECO:0007669"/>
    <property type="project" value="UniProtKB-UniRule"/>
</dbReference>
<dbReference type="Gene3D" id="2.30.30.240">
    <property type="entry name" value="PRC-barrel domain"/>
    <property type="match status" value="1"/>
</dbReference>
<dbReference type="Gene3D" id="2.40.30.60">
    <property type="entry name" value="RimM"/>
    <property type="match status" value="1"/>
</dbReference>
<dbReference type="HAMAP" id="MF_00014">
    <property type="entry name" value="Ribosome_mat_RimM"/>
    <property type="match status" value="1"/>
</dbReference>
<dbReference type="InterPro" id="IPR011033">
    <property type="entry name" value="PRC_barrel-like_sf"/>
</dbReference>
<dbReference type="InterPro" id="IPR056792">
    <property type="entry name" value="PRC_RimM"/>
</dbReference>
<dbReference type="InterPro" id="IPR011961">
    <property type="entry name" value="RimM"/>
</dbReference>
<dbReference type="InterPro" id="IPR002676">
    <property type="entry name" value="RimM_N"/>
</dbReference>
<dbReference type="InterPro" id="IPR036976">
    <property type="entry name" value="RimM_N_sf"/>
</dbReference>
<dbReference type="InterPro" id="IPR009000">
    <property type="entry name" value="Transl_B-barrel_sf"/>
</dbReference>
<dbReference type="NCBIfam" id="TIGR02273">
    <property type="entry name" value="16S_RimM"/>
    <property type="match status" value="1"/>
</dbReference>
<dbReference type="PANTHER" id="PTHR33692">
    <property type="entry name" value="RIBOSOME MATURATION FACTOR RIMM"/>
    <property type="match status" value="1"/>
</dbReference>
<dbReference type="PANTHER" id="PTHR33692:SF1">
    <property type="entry name" value="RIBOSOME MATURATION FACTOR RIMM"/>
    <property type="match status" value="1"/>
</dbReference>
<dbReference type="Pfam" id="PF24986">
    <property type="entry name" value="PRC_RimM"/>
    <property type="match status" value="1"/>
</dbReference>
<dbReference type="Pfam" id="PF01782">
    <property type="entry name" value="RimM"/>
    <property type="match status" value="1"/>
</dbReference>
<dbReference type="SUPFAM" id="SSF50346">
    <property type="entry name" value="PRC-barrel domain"/>
    <property type="match status" value="1"/>
</dbReference>
<dbReference type="SUPFAM" id="SSF50447">
    <property type="entry name" value="Translation proteins"/>
    <property type="match status" value="1"/>
</dbReference>
<feature type="chain" id="PRO_0000163332" description="Ribosome maturation factor RimM">
    <location>
        <begin position="1"/>
        <end position="176"/>
    </location>
</feature>
<feature type="domain" description="PRC barrel" evidence="1">
    <location>
        <begin position="100"/>
        <end position="173"/>
    </location>
</feature>
<accession>Q7V9R4</accession>
<proteinExistence type="inferred from homology"/>
<gene>
    <name evidence="1" type="primary">rimM</name>
    <name type="ordered locus">Pro_1764</name>
</gene>
<comment type="function">
    <text evidence="1">An accessory protein needed during the final step in the assembly of 30S ribosomal subunit, possibly for assembly of the head region. Essential for efficient processing of 16S rRNA. May be needed both before and after RbfA during the maturation of 16S rRNA. It has affinity for free ribosomal 30S subunits but not for 70S ribosomes.</text>
</comment>
<comment type="subunit">
    <text evidence="1">Binds ribosomal protein uS19.</text>
</comment>
<comment type="subcellular location">
    <subcellularLocation>
        <location evidence="1">Cytoplasm</location>
    </subcellularLocation>
</comment>
<comment type="domain">
    <text evidence="1">The PRC barrel domain binds ribosomal protein uS19.</text>
</comment>
<comment type="similarity">
    <text evidence="1">Belongs to the RimM family.</text>
</comment>
<keyword id="KW-0143">Chaperone</keyword>
<keyword id="KW-0963">Cytoplasm</keyword>
<keyword id="KW-1185">Reference proteome</keyword>
<keyword id="KW-0690">Ribosome biogenesis</keyword>
<keyword id="KW-0698">rRNA processing</keyword>
<organism>
    <name type="scientific">Prochlorococcus marinus (strain SARG / CCMP1375 / SS120)</name>
    <dbReference type="NCBI Taxonomy" id="167539"/>
    <lineage>
        <taxon>Bacteria</taxon>
        <taxon>Bacillati</taxon>
        <taxon>Cyanobacteriota</taxon>
        <taxon>Cyanophyceae</taxon>
        <taxon>Synechococcales</taxon>
        <taxon>Prochlorococcaceae</taxon>
        <taxon>Prochlorococcus</taxon>
    </lineage>
</organism>
<name>RIMM_PROMA</name>
<protein>
    <recommendedName>
        <fullName evidence="1">Ribosome maturation factor RimM</fullName>
    </recommendedName>
</protein>